<dbReference type="EMBL" id="X14309">
    <property type="protein sequence ID" value="CAA32490.1"/>
    <property type="molecule type" value="mRNA"/>
</dbReference>
<dbReference type="EMBL" id="AB023408">
    <property type="protein sequence ID" value="BAA90555.1"/>
    <property type="molecule type" value="mRNA"/>
</dbReference>
<dbReference type="EMBL" id="AK161280">
    <property type="protein sequence ID" value="BAE36291.1"/>
    <property type="status" value="ALT_INIT"/>
    <property type="molecule type" value="mRNA"/>
</dbReference>
<dbReference type="EMBL" id="AK165417">
    <property type="protein sequence ID" value="BAE38172.1"/>
    <property type="molecule type" value="mRNA"/>
</dbReference>
<dbReference type="EMBL" id="AC025794">
    <property type="status" value="NOT_ANNOTATED_CDS"/>
    <property type="molecule type" value="Genomic_DNA"/>
</dbReference>
<dbReference type="EMBL" id="CH466612">
    <property type="protein sequence ID" value="EDL33352.1"/>
    <property type="molecule type" value="Genomic_DNA"/>
</dbReference>
<dbReference type="EMBL" id="BC065173">
    <property type="protein sequence ID" value="AAH65173.1"/>
    <property type="molecule type" value="mRNA"/>
</dbReference>
<dbReference type="CCDS" id="CCDS29540.1">
    <molecule id="P10852-1"/>
</dbReference>
<dbReference type="CCDS" id="CCDS50381.1">
    <molecule id="P10852-2"/>
</dbReference>
<dbReference type="PIR" id="S03600">
    <property type="entry name" value="S03600"/>
</dbReference>
<dbReference type="RefSeq" id="NP_001154885.1">
    <molecule id="P10852-2"/>
    <property type="nucleotide sequence ID" value="NM_001161413.2"/>
</dbReference>
<dbReference type="RefSeq" id="NP_001397700.1">
    <molecule id="P10852-1"/>
    <property type="nucleotide sequence ID" value="NM_001410771.1"/>
</dbReference>
<dbReference type="RefSeq" id="NP_032603.3">
    <molecule id="P10852-1"/>
    <property type="nucleotide sequence ID" value="NM_008577.4"/>
</dbReference>
<dbReference type="RefSeq" id="XP_017173567.1">
    <molecule id="P10852-1"/>
    <property type="nucleotide sequence ID" value="XM_017318078.3"/>
</dbReference>
<dbReference type="PDB" id="6I9Q">
    <property type="method" value="X-ray"/>
    <property type="resolution" value="2.10 A"/>
    <property type="chains" value="A=105-526"/>
</dbReference>
<dbReference type="PDB" id="6SUA">
    <property type="method" value="X-ray"/>
    <property type="resolution" value="2.75 A"/>
    <property type="chains" value="B/D=105-526"/>
</dbReference>
<dbReference type="PDBsum" id="6I9Q"/>
<dbReference type="PDBsum" id="6SUA"/>
<dbReference type="SMR" id="P10852"/>
<dbReference type="BioGRID" id="201377">
    <property type="interactions" value="22"/>
</dbReference>
<dbReference type="FunCoup" id="P10852">
    <property type="interactions" value="1035"/>
</dbReference>
<dbReference type="IntAct" id="P10852">
    <property type="interactions" value="5"/>
</dbReference>
<dbReference type="MINT" id="P10852"/>
<dbReference type="STRING" id="10090.ENSMUSP00000130194"/>
<dbReference type="CAZy" id="GH13">
    <property type="family name" value="Glycoside Hydrolase Family 13"/>
</dbReference>
<dbReference type="TCDB" id="2.A.3.8.5">
    <property type="family name" value="the amino acid-polyamine-organocation (apc) family"/>
</dbReference>
<dbReference type="GlyConnect" id="2098">
    <property type="glycosylation" value="7 N-Linked glycans (3 sites)"/>
</dbReference>
<dbReference type="GlyCosmos" id="P10852">
    <property type="glycosylation" value="8 sites, 7 glycans"/>
</dbReference>
<dbReference type="GlyGen" id="P10852">
    <property type="glycosylation" value="9 sites, 11 N-linked glycans (5 sites), 1 O-linked glycan (1 site)"/>
</dbReference>
<dbReference type="iPTMnet" id="P10852"/>
<dbReference type="PhosphoSitePlus" id="P10852"/>
<dbReference type="SwissPalm" id="P10852"/>
<dbReference type="jPOST" id="P10852"/>
<dbReference type="PaxDb" id="10090-ENSMUSP00000130194"/>
<dbReference type="PeptideAtlas" id="P10852"/>
<dbReference type="ProteomicsDB" id="286031">
    <molecule id="P10852-1"/>
</dbReference>
<dbReference type="ProteomicsDB" id="286032">
    <molecule id="P10852-2"/>
</dbReference>
<dbReference type="Pumba" id="P10852"/>
<dbReference type="ABCD" id="P10852">
    <property type="antibodies" value="25 sequenced antibodies"/>
</dbReference>
<dbReference type="Antibodypedia" id="15042">
    <property type="antibodies" value="1160 antibodies from 47 providers"/>
</dbReference>
<dbReference type="DNASU" id="17254"/>
<dbReference type="Ensembl" id="ENSMUST00000010239.6">
    <molecule id="P10852-1"/>
    <property type="protein sequence ID" value="ENSMUSP00000010239.5"/>
    <property type="gene ID" value="ENSMUSG00000010095.14"/>
</dbReference>
<dbReference type="Ensembl" id="ENSMUST00000170157.8">
    <molecule id="P10852-2"/>
    <property type="protein sequence ID" value="ENSMUSP00000130194.2"/>
    <property type="gene ID" value="ENSMUSG00000010095.14"/>
</dbReference>
<dbReference type="GeneID" id="17254"/>
<dbReference type="KEGG" id="mmu:17254"/>
<dbReference type="UCSC" id="uc008gmi.2">
    <molecule id="P10852-2"/>
    <property type="organism name" value="mouse"/>
</dbReference>
<dbReference type="UCSC" id="uc012bib.1">
    <molecule id="P10852-1"/>
    <property type="organism name" value="mouse"/>
</dbReference>
<dbReference type="AGR" id="MGI:96955"/>
<dbReference type="CTD" id="6520"/>
<dbReference type="MGI" id="MGI:96955">
    <property type="gene designation" value="Slc3a2"/>
</dbReference>
<dbReference type="VEuPathDB" id="HostDB:ENSMUSG00000010095"/>
<dbReference type="eggNOG" id="KOG0471">
    <property type="taxonomic scope" value="Eukaryota"/>
</dbReference>
<dbReference type="GeneTree" id="ENSGT00940000156646"/>
<dbReference type="HOGENOM" id="CLU_006462_9_0_1"/>
<dbReference type="InParanoid" id="P10852"/>
<dbReference type="OMA" id="APFMLWD"/>
<dbReference type="OrthoDB" id="81716at9989"/>
<dbReference type="PhylomeDB" id="P10852"/>
<dbReference type="TreeFam" id="TF314498"/>
<dbReference type="Reactome" id="R-MMU-210991">
    <property type="pathway name" value="Basigin interactions"/>
</dbReference>
<dbReference type="Reactome" id="R-MMU-352230">
    <property type="pathway name" value="Amino acid transport across the plasma membrane"/>
</dbReference>
<dbReference type="Reactome" id="R-MMU-71240">
    <property type="pathway name" value="Tryptophan catabolism"/>
</dbReference>
<dbReference type="BioGRID-ORCS" id="17254">
    <property type="hits" value="23 hits in 80 CRISPR screens"/>
</dbReference>
<dbReference type="CD-CODE" id="CE726F99">
    <property type="entry name" value="Postsynaptic density"/>
</dbReference>
<dbReference type="ChiTaRS" id="Slc3a2">
    <property type="organism name" value="mouse"/>
</dbReference>
<dbReference type="PRO" id="PR:P10852"/>
<dbReference type="Proteomes" id="UP000000589">
    <property type="component" value="Chromosome 19"/>
</dbReference>
<dbReference type="RNAct" id="P10852">
    <property type="molecule type" value="protein"/>
</dbReference>
<dbReference type="Bgee" id="ENSMUSG00000010095">
    <property type="expression patterns" value="Expressed in placenta labyrinth and 287 other cell types or tissues"/>
</dbReference>
<dbReference type="ExpressionAtlas" id="P10852">
    <property type="expression patterns" value="baseline and differential"/>
</dbReference>
<dbReference type="GO" id="GO:1990184">
    <property type="term" value="C:amino acid transport complex"/>
    <property type="evidence" value="ECO:0007669"/>
    <property type="project" value="Ensembl"/>
</dbReference>
<dbReference type="GO" id="GO:0070161">
    <property type="term" value="C:anchoring junction"/>
    <property type="evidence" value="ECO:0007669"/>
    <property type="project" value="UniProtKB-SubCell"/>
</dbReference>
<dbReference type="GO" id="GO:0016324">
    <property type="term" value="C:apical plasma membrane"/>
    <property type="evidence" value="ECO:0007669"/>
    <property type="project" value="UniProtKB-SubCell"/>
</dbReference>
<dbReference type="GO" id="GO:0044225">
    <property type="term" value="C:apical pole of neuron"/>
    <property type="evidence" value="ECO:0000314"/>
    <property type="project" value="MGI"/>
</dbReference>
<dbReference type="GO" id="GO:0016323">
    <property type="term" value="C:basolateral plasma membrane"/>
    <property type="evidence" value="ECO:0007669"/>
    <property type="project" value="UniProtKB-SubCell"/>
</dbReference>
<dbReference type="GO" id="GO:0009986">
    <property type="term" value="C:cell surface"/>
    <property type="evidence" value="ECO:0007669"/>
    <property type="project" value="Ensembl"/>
</dbReference>
<dbReference type="GO" id="GO:0005765">
    <property type="term" value="C:lysosomal membrane"/>
    <property type="evidence" value="ECO:0007669"/>
    <property type="project" value="UniProtKB-SubCell"/>
</dbReference>
<dbReference type="GO" id="GO:0042470">
    <property type="term" value="C:melanosome"/>
    <property type="evidence" value="ECO:0007669"/>
    <property type="project" value="UniProtKB-SubCell"/>
</dbReference>
<dbReference type="GO" id="GO:0043025">
    <property type="term" value="C:neuronal cell body"/>
    <property type="evidence" value="ECO:0000314"/>
    <property type="project" value="MGI"/>
</dbReference>
<dbReference type="GO" id="GO:0005654">
    <property type="term" value="C:nucleoplasm"/>
    <property type="evidence" value="ECO:0007669"/>
    <property type="project" value="Ensembl"/>
</dbReference>
<dbReference type="GO" id="GO:0005886">
    <property type="term" value="C:plasma membrane"/>
    <property type="evidence" value="ECO:0000314"/>
    <property type="project" value="UniProtKB"/>
</dbReference>
<dbReference type="GO" id="GO:0045202">
    <property type="term" value="C:synapse"/>
    <property type="evidence" value="ECO:0000314"/>
    <property type="project" value="SynGO"/>
</dbReference>
<dbReference type="GO" id="GO:0015173">
    <property type="term" value="F:aromatic amino acid transmembrane transporter activity"/>
    <property type="evidence" value="ECO:0007669"/>
    <property type="project" value="Ensembl"/>
</dbReference>
<dbReference type="GO" id="GO:0003725">
    <property type="term" value="F:double-stranded RNA binding"/>
    <property type="evidence" value="ECO:0000266"/>
    <property type="project" value="MGI"/>
</dbReference>
<dbReference type="GO" id="GO:0140272">
    <property type="term" value="F:exogenous protein binding"/>
    <property type="evidence" value="ECO:0007669"/>
    <property type="project" value="Ensembl"/>
</dbReference>
<dbReference type="GO" id="GO:0015180">
    <property type="term" value="F:L-alanine transmembrane transporter activity"/>
    <property type="evidence" value="ECO:0007669"/>
    <property type="project" value="Ensembl"/>
</dbReference>
<dbReference type="GO" id="GO:0015190">
    <property type="term" value="F:L-leucine transmembrane transporter activity"/>
    <property type="evidence" value="ECO:0007669"/>
    <property type="project" value="Ensembl"/>
</dbReference>
<dbReference type="GO" id="GO:0046982">
    <property type="term" value="F:protein heterodimerization activity"/>
    <property type="evidence" value="ECO:0007669"/>
    <property type="project" value="Ensembl"/>
</dbReference>
<dbReference type="GO" id="GO:0042803">
    <property type="term" value="F:protein homodimerization activity"/>
    <property type="evidence" value="ECO:0000314"/>
    <property type="project" value="UniProtKB"/>
</dbReference>
<dbReference type="GO" id="GO:0005975">
    <property type="term" value="P:carbohydrate metabolic process"/>
    <property type="evidence" value="ECO:0007669"/>
    <property type="project" value="InterPro"/>
</dbReference>
<dbReference type="GO" id="GO:0015818">
    <property type="term" value="P:isoleucine transport"/>
    <property type="evidence" value="ECO:0007669"/>
    <property type="project" value="Ensembl"/>
</dbReference>
<dbReference type="GO" id="GO:1904273">
    <property type="term" value="P:L-alanine import across plasma membrane"/>
    <property type="evidence" value="ECO:0007669"/>
    <property type="project" value="Ensembl"/>
</dbReference>
<dbReference type="GO" id="GO:1902024">
    <property type="term" value="P:L-histidine transport"/>
    <property type="evidence" value="ECO:0007669"/>
    <property type="project" value="Ensembl"/>
</dbReference>
<dbReference type="GO" id="GO:1903801">
    <property type="term" value="P:L-leucine import across plasma membrane"/>
    <property type="evidence" value="ECO:0000250"/>
    <property type="project" value="UniProtKB"/>
</dbReference>
<dbReference type="GO" id="GO:0015820">
    <property type="term" value="P:L-leucine transport"/>
    <property type="evidence" value="ECO:0000314"/>
    <property type="project" value="UniProtKB"/>
</dbReference>
<dbReference type="GO" id="GO:0015821">
    <property type="term" value="P:methionine transport"/>
    <property type="evidence" value="ECO:0007669"/>
    <property type="project" value="Ensembl"/>
</dbReference>
<dbReference type="GO" id="GO:0015823">
    <property type="term" value="P:phenylalanine transport"/>
    <property type="evidence" value="ECO:0007669"/>
    <property type="project" value="Ensembl"/>
</dbReference>
<dbReference type="GO" id="GO:0015824">
    <property type="term" value="P:proline transport"/>
    <property type="evidence" value="ECO:0007669"/>
    <property type="project" value="Ensembl"/>
</dbReference>
<dbReference type="GO" id="GO:0043330">
    <property type="term" value="P:response to exogenous dsRNA"/>
    <property type="evidence" value="ECO:0000266"/>
    <property type="project" value="MGI"/>
</dbReference>
<dbReference type="GO" id="GO:0046718">
    <property type="term" value="P:symbiont entry into host cell"/>
    <property type="evidence" value="ECO:0007669"/>
    <property type="project" value="Ensembl"/>
</dbReference>
<dbReference type="GO" id="GO:0070327">
    <property type="term" value="P:thyroid hormone transport"/>
    <property type="evidence" value="ECO:0007669"/>
    <property type="project" value="Ensembl"/>
</dbReference>
<dbReference type="GO" id="GO:0015827">
    <property type="term" value="P:tryptophan transport"/>
    <property type="evidence" value="ECO:0000250"/>
    <property type="project" value="UniProtKB"/>
</dbReference>
<dbReference type="GO" id="GO:0015828">
    <property type="term" value="P:tyrosine transport"/>
    <property type="evidence" value="ECO:0007669"/>
    <property type="project" value="Ensembl"/>
</dbReference>
<dbReference type="GO" id="GO:0015829">
    <property type="term" value="P:valine transport"/>
    <property type="evidence" value="ECO:0007669"/>
    <property type="project" value="Ensembl"/>
</dbReference>
<dbReference type="FunFam" id="3.20.20.80:FF:000061">
    <property type="entry name" value="4F2 cell-surface antigen heavy chain"/>
    <property type="match status" value="1"/>
</dbReference>
<dbReference type="Gene3D" id="3.20.20.80">
    <property type="entry name" value="Glycosidases"/>
    <property type="match status" value="1"/>
</dbReference>
<dbReference type="Gene3D" id="2.60.40.1180">
    <property type="entry name" value="Golgi alpha-mannosidase II"/>
    <property type="match status" value="1"/>
</dbReference>
<dbReference type="InterPro" id="IPR006047">
    <property type="entry name" value="Glyco_hydro_13_cat_dom"/>
</dbReference>
<dbReference type="InterPro" id="IPR013780">
    <property type="entry name" value="Glyco_hydro_b"/>
</dbReference>
<dbReference type="InterPro" id="IPR017853">
    <property type="entry name" value="Glycoside_hydrolase_SF"/>
</dbReference>
<dbReference type="InterPro" id="IPR042280">
    <property type="entry name" value="SLC3A2"/>
</dbReference>
<dbReference type="InterPro" id="IPR031984">
    <property type="entry name" value="SLC3A2_N"/>
</dbReference>
<dbReference type="PANTHER" id="PTHR46673">
    <property type="entry name" value="4F2 CELL-SURFACE ANTIGEN HEAVY CHAIN"/>
    <property type="match status" value="1"/>
</dbReference>
<dbReference type="PANTHER" id="PTHR46673:SF1">
    <property type="entry name" value="4F2 CELL-SURFACE ANTIGEN HEAVY CHAIN"/>
    <property type="match status" value="1"/>
</dbReference>
<dbReference type="Pfam" id="PF00128">
    <property type="entry name" value="Alpha-amylase"/>
    <property type="match status" value="1"/>
</dbReference>
<dbReference type="Pfam" id="PF16028">
    <property type="entry name" value="SLC3A2_N"/>
    <property type="match status" value="1"/>
</dbReference>
<dbReference type="SMART" id="SM00642">
    <property type="entry name" value="Aamy"/>
    <property type="match status" value="1"/>
</dbReference>
<dbReference type="SUPFAM" id="SSF51445">
    <property type="entry name" value="(Trans)glycosidases"/>
    <property type="match status" value="1"/>
</dbReference>
<dbReference type="SUPFAM" id="SSF51011">
    <property type="entry name" value="Glycosyl hydrolase domain"/>
    <property type="match status" value="1"/>
</dbReference>
<organism>
    <name type="scientific">Mus musculus</name>
    <name type="common">Mouse</name>
    <dbReference type="NCBI Taxonomy" id="10090"/>
    <lineage>
        <taxon>Eukaryota</taxon>
        <taxon>Metazoa</taxon>
        <taxon>Chordata</taxon>
        <taxon>Craniata</taxon>
        <taxon>Vertebrata</taxon>
        <taxon>Euteleostomi</taxon>
        <taxon>Mammalia</taxon>
        <taxon>Eutheria</taxon>
        <taxon>Euarchontoglires</taxon>
        <taxon>Glires</taxon>
        <taxon>Rodentia</taxon>
        <taxon>Myomorpha</taxon>
        <taxon>Muroidea</taxon>
        <taxon>Muridae</taxon>
        <taxon>Murinae</taxon>
        <taxon>Mus</taxon>
        <taxon>Mus</taxon>
    </lineage>
</organism>
<evidence type="ECO:0000250" key="1">
    <source>
        <dbReference type="UniProtKB" id="P08195"/>
    </source>
</evidence>
<evidence type="ECO:0000250" key="2">
    <source>
        <dbReference type="UniProtKB" id="P63115"/>
    </source>
</evidence>
<evidence type="ECO:0000250" key="3">
    <source>
        <dbReference type="UniProtKB" id="Q794F9"/>
    </source>
</evidence>
<evidence type="ECO:0000255" key="4"/>
<evidence type="ECO:0000256" key="5">
    <source>
        <dbReference type="SAM" id="MobiDB-lite"/>
    </source>
</evidence>
<evidence type="ECO:0000269" key="6">
    <source>
    </source>
</evidence>
<evidence type="ECO:0000269" key="7">
    <source>
    </source>
</evidence>
<evidence type="ECO:0000269" key="8">
    <source>
    </source>
</evidence>
<evidence type="ECO:0000269" key="9">
    <source>
    </source>
</evidence>
<evidence type="ECO:0000269" key="10">
    <source>
    </source>
</evidence>
<evidence type="ECO:0000269" key="11">
    <source>
    </source>
</evidence>
<evidence type="ECO:0000269" key="12">
    <source>
    </source>
</evidence>
<evidence type="ECO:0000269" key="13">
    <source>
    </source>
</evidence>
<evidence type="ECO:0000303" key="14">
    <source>
    </source>
</evidence>
<evidence type="ECO:0000303" key="15">
    <source>
    </source>
</evidence>
<evidence type="ECO:0000305" key="16"/>
<evidence type="ECO:0000305" key="17">
    <source>
    </source>
</evidence>
<evidence type="ECO:0000312" key="18">
    <source>
        <dbReference type="MGI" id="MGI:96955"/>
    </source>
</evidence>
<evidence type="ECO:0007744" key="19">
    <source>
    </source>
</evidence>
<evidence type="ECO:0007744" key="20">
    <source>
    </source>
</evidence>
<evidence type="ECO:0007829" key="21">
    <source>
        <dbReference type="PDB" id="6I9Q"/>
    </source>
</evidence>
<accession>P10852</accession>
<accession>G3UWA6</accession>
<accession>Q54AH5</accession>
<proteinExistence type="evidence at protein level"/>
<reference key="1">
    <citation type="journal article" date="1989" name="Nucleic Acids Res.">
        <title>Structure, expression and regulation of the murine 4F2 heavy chain.</title>
        <authorList>
            <person name="Parmacek M.S."/>
            <person name="Karpinski B.A."/>
            <person name="Gottsdiener K.M."/>
            <person name="Thompson C.B."/>
            <person name="Leiden J.M."/>
        </authorList>
    </citation>
    <scope>NUCLEOTIDE SEQUENCE [MRNA] (ISOFORM 1)</scope>
    <scope>TISSUE SPECIFICITY</scope>
    <scope>INDUCTION</scope>
    <source>
        <strain>C57BL/6 X DBA/2</strain>
        <strain>ICR</strain>
        <tissue>Macrophage</tissue>
        <tissue>Pre-B cell</tissue>
    </source>
</reference>
<reference key="2">
    <citation type="submission" date="1999-02" db="EMBL/GenBank/DDBJ databases">
        <title>Localization of expression of system L neutral amino acid transporter LAT1 in brain.</title>
        <authorList>
            <person name="Kanai Y."/>
            <person name="Watanabe M."/>
            <person name="Endou H."/>
        </authorList>
    </citation>
    <scope>NUCLEOTIDE SEQUENCE [MRNA] (ISOFORM 1)</scope>
    <source>
        <strain>ICR</strain>
        <tissue>Brain</tissue>
    </source>
</reference>
<reference key="3">
    <citation type="journal article" date="2005" name="Science">
        <title>The transcriptional landscape of the mammalian genome.</title>
        <authorList>
            <person name="Carninci P."/>
            <person name="Kasukawa T."/>
            <person name="Katayama S."/>
            <person name="Gough J."/>
            <person name="Frith M.C."/>
            <person name="Maeda N."/>
            <person name="Oyama R."/>
            <person name="Ravasi T."/>
            <person name="Lenhard B."/>
            <person name="Wells C."/>
            <person name="Kodzius R."/>
            <person name="Shimokawa K."/>
            <person name="Bajic V.B."/>
            <person name="Brenner S.E."/>
            <person name="Batalov S."/>
            <person name="Forrest A.R."/>
            <person name="Zavolan M."/>
            <person name="Davis M.J."/>
            <person name="Wilming L.G."/>
            <person name="Aidinis V."/>
            <person name="Allen J.E."/>
            <person name="Ambesi-Impiombato A."/>
            <person name="Apweiler R."/>
            <person name="Aturaliya R.N."/>
            <person name="Bailey T.L."/>
            <person name="Bansal M."/>
            <person name="Baxter L."/>
            <person name="Beisel K.W."/>
            <person name="Bersano T."/>
            <person name="Bono H."/>
            <person name="Chalk A.M."/>
            <person name="Chiu K.P."/>
            <person name="Choudhary V."/>
            <person name="Christoffels A."/>
            <person name="Clutterbuck D.R."/>
            <person name="Crowe M.L."/>
            <person name="Dalla E."/>
            <person name="Dalrymple B.P."/>
            <person name="de Bono B."/>
            <person name="Della Gatta G."/>
            <person name="di Bernardo D."/>
            <person name="Down T."/>
            <person name="Engstrom P."/>
            <person name="Fagiolini M."/>
            <person name="Faulkner G."/>
            <person name="Fletcher C.F."/>
            <person name="Fukushima T."/>
            <person name="Furuno M."/>
            <person name="Futaki S."/>
            <person name="Gariboldi M."/>
            <person name="Georgii-Hemming P."/>
            <person name="Gingeras T.R."/>
            <person name="Gojobori T."/>
            <person name="Green R.E."/>
            <person name="Gustincich S."/>
            <person name="Harbers M."/>
            <person name="Hayashi Y."/>
            <person name="Hensch T.K."/>
            <person name="Hirokawa N."/>
            <person name="Hill D."/>
            <person name="Huminiecki L."/>
            <person name="Iacono M."/>
            <person name="Ikeo K."/>
            <person name="Iwama A."/>
            <person name="Ishikawa T."/>
            <person name="Jakt M."/>
            <person name="Kanapin A."/>
            <person name="Katoh M."/>
            <person name="Kawasawa Y."/>
            <person name="Kelso J."/>
            <person name="Kitamura H."/>
            <person name="Kitano H."/>
            <person name="Kollias G."/>
            <person name="Krishnan S.P."/>
            <person name="Kruger A."/>
            <person name="Kummerfeld S.K."/>
            <person name="Kurochkin I.V."/>
            <person name="Lareau L.F."/>
            <person name="Lazarevic D."/>
            <person name="Lipovich L."/>
            <person name="Liu J."/>
            <person name="Liuni S."/>
            <person name="McWilliam S."/>
            <person name="Madan Babu M."/>
            <person name="Madera M."/>
            <person name="Marchionni L."/>
            <person name="Matsuda H."/>
            <person name="Matsuzawa S."/>
            <person name="Miki H."/>
            <person name="Mignone F."/>
            <person name="Miyake S."/>
            <person name="Morris K."/>
            <person name="Mottagui-Tabar S."/>
            <person name="Mulder N."/>
            <person name="Nakano N."/>
            <person name="Nakauchi H."/>
            <person name="Ng P."/>
            <person name="Nilsson R."/>
            <person name="Nishiguchi S."/>
            <person name="Nishikawa S."/>
            <person name="Nori F."/>
            <person name="Ohara O."/>
            <person name="Okazaki Y."/>
            <person name="Orlando V."/>
            <person name="Pang K.C."/>
            <person name="Pavan W.J."/>
            <person name="Pavesi G."/>
            <person name="Pesole G."/>
            <person name="Petrovsky N."/>
            <person name="Piazza S."/>
            <person name="Reed J."/>
            <person name="Reid J.F."/>
            <person name="Ring B.Z."/>
            <person name="Ringwald M."/>
            <person name="Rost B."/>
            <person name="Ruan Y."/>
            <person name="Salzberg S.L."/>
            <person name="Sandelin A."/>
            <person name="Schneider C."/>
            <person name="Schoenbach C."/>
            <person name="Sekiguchi K."/>
            <person name="Semple C.A."/>
            <person name="Seno S."/>
            <person name="Sessa L."/>
            <person name="Sheng Y."/>
            <person name="Shibata Y."/>
            <person name="Shimada H."/>
            <person name="Shimada K."/>
            <person name="Silva D."/>
            <person name="Sinclair B."/>
            <person name="Sperling S."/>
            <person name="Stupka E."/>
            <person name="Sugiura K."/>
            <person name="Sultana R."/>
            <person name="Takenaka Y."/>
            <person name="Taki K."/>
            <person name="Tammoja K."/>
            <person name="Tan S.L."/>
            <person name="Tang S."/>
            <person name="Taylor M.S."/>
            <person name="Tegner J."/>
            <person name="Teichmann S.A."/>
            <person name="Ueda H.R."/>
            <person name="van Nimwegen E."/>
            <person name="Verardo R."/>
            <person name="Wei C.L."/>
            <person name="Yagi K."/>
            <person name="Yamanishi H."/>
            <person name="Zabarovsky E."/>
            <person name="Zhu S."/>
            <person name="Zimmer A."/>
            <person name="Hide W."/>
            <person name="Bult C."/>
            <person name="Grimmond S.M."/>
            <person name="Teasdale R.D."/>
            <person name="Liu E.T."/>
            <person name="Brusic V."/>
            <person name="Quackenbush J."/>
            <person name="Wahlestedt C."/>
            <person name="Mattick J.S."/>
            <person name="Hume D.A."/>
            <person name="Kai C."/>
            <person name="Sasaki D."/>
            <person name="Tomaru Y."/>
            <person name="Fukuda S."/>
            <person name="Kanamori-Katayama M."/>
            <person name="Suzuki M."/>
            <person name="Aoki J."/>
            <person name="Arakawa T."/>
            <person name="Iida J."/>
            <person name="Imamura K."/>
            <person name="Itoh M."/>
            <person name="Kato T."/>
            <person name="Kawaji H."/>
            <person name="Kawagashira N."/>
            <person name="Kawashima T."/>
            <person name="Kojima M."/>
            <person name="Kondo S."/>
            <person name="Konno H."/>
            <person name="Nakano K."/>
            <person name="Ninomiya N."/>
            <person name="Nishio T."/>
            <person name="Okada M."/>
            <person name="Plessy C."/>
            <person name="Shibata K."/>
            <person name="Shiraki T."/>
            <person name="Suzuki S."/>
            <person name="Tagami M."/>
            <person name="Waki K."/>
            <person name="Watahiki A."/>
            <person name="Okamura-Oho Y."/>
            <person name="Suzuki H."/>
            <person name="Kawai J."/>
            <person name="Hayashizaki Y."/>
        </authorList>
    </citation>
    <scope>NUCLEOTIDE SEQUENCE [LARGE SCALE MRNA] (ISOFORMS 1 AND 2)</scope>
    <source>
        <strain>C57BL/6J</strain>
        <tissue>Kidney</tissue>
        <tissue>Testis</tissue>
    </source>
</reference>
<reference key="4">
    <citation type="journal article" date="2009" name="PLoS Biol.">
        <title>Lineage-specific biology revealed by a finished genome assembly of the mouse.</title>
        <authorList>
            <person name="Church D.M."/>
            <person name="Goodstadt L."/>
            <person name="Hillier L.W."/>
            <person name="Zody M.C."/>
            <person name="Goldstein S."/>
            <person name="She X."/>
            <person name="Bult C.J."/>
            <person name="Agarwala R."/>
            <person name="Cherry J.L."/>
            <person name="DiCuccio M."/>
            <person name="Hlavina W."/>
            <person name="Kapustin Y."/>
            <person name="Meric P."/>
            <person name="Maglott D."/>
            <person name="Birtle Z."/>
            <person name="Marques A.C."/>
            <person name="Graves T."/>
            <person name="Zhou S."/>
            <person name="Teague B."/>
            <person name="Potamousis K."/>
            <person name="Churas C."/>
            <person name="Place M."/>
            <person name="Herschleb J."/>
            <person name="Runnheim R."/>
            <person name="Forrest D."/>
            <person name="Amos-Landgraf J."/>
            <person name="Schwartz D.C."/>
            <person name="Cheng Z."/>
            <person name="Lindblad-Toh K."/>
            <person name="Eichler E.E."/>
            <person name="Ponting C.P."/>
        </authorList>
    </citation>
    <scope>NUCLEOTIDE SEQUENCE [LARGE SCALE GENOMIC DNA]</scope>
    <source>
        <strain>C57BL/6J</strain>
    </source>
</reference>
<reference key="5">
    <citation type="submission" date="2005-07" db="EMBL/GenBank/DDBJ databases">
        <authorList>
            <person name="Mural R.J."/>
            <person name="Adams M.D."/>
            <person name="Myers E.W."/>
            <person name="Smith H.O."/>
            <person name="Venter J.C."/>
        </authorList>
    </citation>
    <scope>NUCLEOTIDE SEQUENCE [LARGE SCALE GENOMIC DNA]</scope>
</reference>
<reference key="6">
    <citation type="journal article" date="2004" name="Genome Res.">
        <title>The status, quality, and expansion of the NIH full-length cDNA project: the Mammalian Gene Collection (MGC).</title>
        <authorList>
            <consortium name="The MGC Project Team"/>
        </authorList>
    </citation>
    <scope>NUCLEOTIDE SEQUENCE [LARGE SCALE MRNA] (ISOFORM 1)</scope>
    <source>
        <strain>C57BL/6J</strain>
        <tissue>Brain</tissue>
    </source>
</reference>
<reference key="7">
    <citation type="submission" date="2007-04" db="UniProtKB">
        <authorList>
            <person name="Lubec G."/>
            <person name="Kang S.U."/>
        </authorList>
    </citation>
    <scope>PROTEIN SEQUENCE OF 43-53; 163-171; 456-463 AND 488-496</scope>
    <scope>IDENTIFICATION BY MASS SPECTROMETRY</scope>
    <source>
        <strain>C57BL/6J</strain>
        <tissue>Brain</tissue>
    </source>
</reference>
<reference key="8">
    <citation type="journal article" date="1999" name="J. Biol. Chem.">
        <title>4F2 (CD98) heavy chain is associated covalently with an amino acid transporter and controls intracellular trafficking and membrane topology of 4F2 heterodimer.</title>
        <authorList>
            <person name="Nakamura E."/>
            <person name="Sato M."/>
            <person name="Yang H."/>
            <person name="Miyagawa F."/>
            <person name="Harasaki M."/>
            <person name="Tomita K."/>
            <person name="Matsuoka S."/>
            <person name="Noma A."/>
            <person name="Iwai K."/>
            <person name="Minato N."/>
        </authorList>
    </citation>
    <scope>FUNCTION</scope>
    <scope>SUBUNIT</scope>
    <scope>INTERACTION WITH SLC7A5</scope>
    <scope>SUBCELLULAR LOCATION</scope>
    <scope>TISSUE SPECIFICITY</scope>
    <scope>DEVELOPMENTAL STAGE</scope>
    <scope>INDUCTION</scope>
    <scope>MUTAGENESIS OF CYS-103</scope>
    <source>
        <strain>BALB/cJ</strain>
    </source>
</reference>
<reference key="9">
    <citation type="journal article" date="1999" name="J. Biol. Chem.">
        <title>LAT2, a new basolateral 4F2hc/CD98-associated amino acid transporter of kidney and intestine.</title>
        <authorList>
            <person name="Rossier G."/>
            <person name="Meier C."/>
            <person name="Bauch C."/>
            <person name="Summa V."/>
            <person name="Sordat B."/>
            <person name="Verrey F."/>
            <person name="Kuehn L.C."/>
        </authorList>
    </citation>
    <scope>SUBCELLULAR LOCATION</scope>
    <scope>TISSUE SPECIFICITY</scope>
    <scope>SUBUNIT</scope>
    <scope>INTERACTION WITH SLC7A8</scope>
</reference>
<reference key="10">
    <citation type="journal article" date="2000" name="Brain Res.">
        <title>The 4F2hc/LAT1 complex transports L-DOPA across the blood-brain barrier.</title>
        <authorList>
            <person name="Kageyama T."/>
            <person name="Nakamura M."/>
            <person name="Matsuo A."/>
            <person name="Yamasaki Y."/>
            <person name="Takakura Y."/>
            <person name="Hashida M."/>
            <person name="Kanai Y."/>
            <person name="Naito M."/>
            <person name="Tsuruo T."/>
            <person name="Minato N."/>
            <person name="Shimohama S."/>
        </authorList>
    </citation>
    <scope>FUNCTION</scope>
    <scope>SUBUNIT</scope>
</reference>
<reference key="11">
    <citation type="journal article" date="2000" name="J. Biol. Chem.">
        <title>Identification and characterization of a Na+-independent neutral amino acid transporter that associates with the 4F2 heavy chain and exhibits substrate selectivity for small neutral D- and L- amino acids.</title>
        <authorList>
            <person name="Fukasawa Y."/>
            <person name="Segawa H."/>
            <person name="Kim J.Y."/>
            <person name="Chairoungdua A."/>
            <person name="Kim D.K."/>
            <person name="Matsuo H."/>
            <person name="Cha S.H."/>
            <person name="Endou H."/>
            <person name="Kanai Y."/>
        </authorList>
    </citation>
    <scope>FUNCTION</scope>
    <scope>SUBUNIT</scope>
    <scope>INTERACTION WITH SLC7A10</scope>
    <source>
        <tissue>Brain</tissue>
    </source>
</reference>
<reference key="12">
    <citation type="journal article" date="2003" name="Biochem. Biophys. Res. Commun.">
        <title>The targeted disruption of the CD98 gene results in embryonic lethality.</title>
        <authorList>
            <person name="Tsumura H."/>
            <person name="Suzuki N."/>
            <person name="Saito H."/>
            <person name="Kawano M."/>
            <person name="Otake S."/>
            <person name="Kozuka Y."/>
            <person name="Komada H."/>
            <person name="Tsurudome M."/>
            <person name="Ito Y."/>
        </authorList>
    </citation>
    <scope>DISRUPTION PHENOTYPE</scope>
</reference>
<reference key="13">
    <citation type="journal article" date="2009" name="Immunity">
        <title>The phagosomal proteome in interferon-gamma-activated macrophages.</title>
        <authorList>
            <person name="Trost M."/>
            <person name="English L."/>
            <person name="Lemieux S."/>
            <person name="Courcelles M."/>
            <person name="Desjardins M."/>
            <person name="Thibault P."/>
        </authorList>
    </citation>
    <scope>PHOSPHORYLATION [LARGE SCALE ANALYSIS] AT SER-58</scope>
    <scope>IDENTIFICATION BY MASS SPECTROMETRY [LARGE SCALE ANALYSIS]</scope>
</reference>
<reference key="14">
    <citation type="journal article" date="2009" name="Mol. Cell. Proteomics">
        <title>The mouse C2C12 myoblast cell surface N-linked glycoproteome: identification, glycosite occupancy, and membrane orientation.</title>
        <authorList>
            <person name="Gundry R.L."/>
            <person name="Raginski K."/>
            <person name="Tarasova Y."/>
            <person name="Tchernyshyov I."/>
            <person name="Bausch-Fluck D."/>
            <person name="Elliott S.T."/>
            <person name="Boheler K.R."/>
            <person name="Van Eyk J.E."/>
            <person name="Wollscheid B."/>
        </authorList>
    </citation>
    <scope>GLYCOSYLATION [LARGE SCALE ANALYSIS] AT ASN-166; ASN-259; ASN-385 AND ASN-399</scope>
    <source>
        <tissue>Myoblast</tissue>
    </source>
</reference>
<reference key="15">
    <citation type="journal article" date="2009" name="Nat. Biotechnol.">
        <title>Mass-spectrometric identification and relative quantification of N-linked cell surface glycoproteins.</title>
        <authorList>
            <person name="Wollscheid B."/>
            <person name="Bausch-Fluck D."/>
            <person name="Henderson C."/>
            <person name="O'Brien R."/>
            <person name="Bibel M."/>
            <person name="Schiess R."/>
            <person name="Aebersold R."/>
            <person name="Watts J.D."/>
        </authorList>
    </citation>
    <scope>GLYCOSYLATION [LARGE SCALE ANALYSIS] AT ASN-166; ASN-259; ASN-385 AND ASN-399</scope>
</reference>
<reference key="16">
    <citation type="journal article" date="2010" name="Cell">
        <title>A tissue-specific atlas of mouse protein phosphorylation and expression.</title>
        <authorList>
            <person name="Huttlin E.L."/>
            <person name="Jedrychowski M.P."/>
            <person name="Elias J.E."/>
            <person name="Goswami T."/>
            <person name="Rad R."/>
            <person name="Beausoleil S.A."/>
            <person name="Villen J."/>
            <person name="Haas W."/>
            <person name="Sowa M.E."/>
            <person name="Gygi S.P."/>
        </authorList>
    </citation>
    <scope>PHOSPHORYLATION [LARGE SCALE ANALYSIS] AT SER-58</scope>
    <scope>IDENTIFICATION BY MASS SPECTROMETRY [LARGE SCALE ANALYSIS]</scope>
    <source>
        <tissue>Brain</tissue>
        <tissue>Brown adipose tissue</tissue>
        <tissue>Heart</tissue>
        <tissue>Kidney</tissue>
        <tissue>Liver</tissue>
        <tissue>Lung</tissue>
        <tissue>Pancreas</tissue>
        <tissue>Spleen</tissue>
        <tissue>Testis</tissue>
    </source>
</reference>
<reference key="17">
    <citation type="journal article" date="2019" name="Proteins">
        <title>Structural differences between the ectodomains of murine and human CD98hc.</title>
        <authorList>
            <person name="Deuschle F.C."/>
            <person name="Schiefner A."/>
            <person name="Skerra A."/>
        </authorList>
    </citation>
    <scope>X-RAY CRYSTALLOGRAPHY (2.10 ANGSTROMS) OF 105-526</scope>
</reference>
<protein>
    <recommendedName>
        <fullName evidence="16">Amino acid transporter heavy chain SLC3A2</fullName>
    </recommendedName>
    <alternativeName>
        <fullName evidence="15">4F2 cell-surface antigen heavy chain</fullName>
        <shortName evidence="1">4F2hc</shortName>
    </alternativeName>
    <alternativeName>
        <fullName evidence="1">Solute carrier family 3 member 2</fullName>
    </alternativeName>
    <cdAntigenName>CD98</cdAntigenName>
</protein>
<feature type="chain" id="PRO_0000064384" description="Amino acid transporter heavy chain SLC3A2">
    <location>
        <begin position="1"/>
        <end position="526"/>
    </location>
</feature>
<feature type="topological domain" description="Cytoplasmic" evidence="1">
    <location>
        <begin position="1"/>
        <end position="75"/>
    </location>
</feature>
<feature type="transmembrane region" description="Helical; Signal-anchor for type II membrane protein">
    <location>
        <begin position="76"/>
        <end position="99"/>
    </location>
</feature>
<feature type="topological domain" description="Extracellular" evidence="1">
    <location>
        <begin position="100"/>
        <end position="526"/>
    </location>
</feature>
<feature type="region of interest" description="Disordered" evidence="5">
    <location>
        <begin position="1"/>
        <end position="31"/>
    </location>
</feature>
<feature type="compositionally biased region" description="Basic and acidic residues" evidence="5">
    <location>
        <begin position="7"/>
        <end position="21"/>
    </location>
</feature>
<feature type="modified residue" description="Phosphoserine" evidence="1">
    <location>
        <position position="2"/>
    </location>
</feature>
<feature type="modified residue" description="Phosphothreonine" evidence="3">
    <location>
        <position position="5"/>
    </location>
</feature>
<feature type="modified residue" description="Phosphoserine" evidence="19 20">
    <location>
        <position position="58"/>
    </location>
</feature>
<feature type="modified residue" description="Phosphoserine" evidence="1">
    <location>
        <position position="300"/>
    </location>
</feature>
<feature type="modified residue" description="Phosphoserine" evidence="1">
    <location>
        <position position="302"/>
    </location>
</feature>
<feature type="modified residue" description="Phosphoserine" evidence="1">
    <location>
        <position position="420"/>
    </location>
</feature>
<feature type="glycosylation site" description="N-linked (GlcNAc...) asparagine" evidence="10 11">
    <location>
        <position position="166"/>
    </location>
</feature>
<feature type="glycosylation site" description="N-linked (GlcNAc...) asparagine" evidence="10 11">
    <location>
        <position position="259"/>
    </location>
</feature>
<feature type="glycosylation site" description="N-linked (GlcNAc...) asparagine" evidence="4">
    <location>
        <position position="263"/>
    </location>
</feature>
<feature type="glycosylation site" description="N-linked (GlcNAc...) asparagine" evidence="4">
    <location>
        <position position="301"/>
    </location>
</feature>
<feature type="glycosylation site" description="N-linked (GlcNAc...) asparagine" evidence="1">
    <location>
        <position position="318"/>
    </location>
</feature>
<feature type="glycosylation site" description="N-linked (GlcNAc...) asparagine" evidence="10 11">
    <location>
        <position position="385"/>
    </location>
</feature>
<feature type="glycosylation site" description="N-linked (GlcNAc...) asparagine" evidence="10 11">
    <location>
        <position position="399"/>
    </location>
</feature>
<feature type="glycosylation site" description="N-linked (GlcNAc...) asparagine" evidence="4">
    <location>
        <position position="509"/>
    </location>
</feature>
<feature type="disulfide bond" description="Interchain (with C-164 in SLC7A5; C-158 in SLC7A11 and C-153 in SLC7A8)" evidence="1 17">
    <location>
        <position position="103"/>
    </location>
</feature>
<feature type="cross-link" description="Glycyl lysine isopeptide (Lys-Gly) (interchain with G-Cter in ubiquitin)" evidence="1">
    <location>
        <position position="42"/>
    </location>
</feature>
<feature type="cross-link" description="Glycyl lysine isopeptide (Lys-Gly) (interchain with G-Cter in SUMO2)" evidence="1">
    <location>
        <position position="59"/>
    </location>
</feature>
<feature type="splice variant" id="VSP_054953" description="In isoform 2." evidence="14">
    <original>M</original>
    <variation>MDPEPTEHSTDGVSVPRQPPSAQTGLDVQVVSAAGDSGTM</variation>
    <location>
        <position position="1"/>
    </location>
</feature>
<feature type="mutagenesis site" description="Loss of interchain disulfide bond. No effect on guidance of SLC7A5 to the plasma membrane." evidence="13">
    <original>C</original>
    <variation>S</variation>
    <location>
        <position position="103"/>
    </location>
</feature>
<feature type="helix" evidence="21">
    <location>
        <begin position="111"/>
        <end position="114"/>
    </location>
</feature>
<feature type="strand" evidence="21">
    <location>
        <begin position="117"/>
        <end position="121"/>
    </location>
</feature>
<feature type="helix" evidence="21">
    <location>
        <begin position="123"/>
        <end position="127"/>
    </location>
</feature>
<feature type="strand" evidence="21">
    <location>
        <begin position="129"/>
        <end position="131"/>
    </location>
</feature>
<feature type="helix" evidence="21">
    <location>
        <begin position="133"/>
        <end position="138"/>
    </location>
</feature>
<feature type="helix" evidence="21">
    <location>
        <begin position="141"/>
        <end position="146"/>
    </location>
</feature>
<feature type="strand" evidence="21">
    <location>
        <begin position="150"/>
        <end position="154"/>
    </location>
</feature>
<feature type="strand" evidence="21">
    <location>
        <begin position="158"/>
        <end position="160"/>
    </location>
</feature>
<feature type="helix" evidence="21">
    <location>
        <begin position="165"/>
        <end position="167"/>
    </location>
</feature>
<feature type="strand" evidence="21">
    <location>
        <begin position="168"/>
        <end position="173"/>
    </location>
</feature>
<feature type="turn" evidence="21">
    <location>
        <begin position="175"/>
        <end position="177"/>
    </location>
</feature>
<feature type="helix" evidence="21">
    <location>
        <begin position="180"/>
        <end position="192"/>
    </location>
</feature>
<feature type="strand" evidence="21">
    <location>
        <begin position="196"/>
        <end position="200"/>
    </location>
</feature>
<feature type="turn" evidence="21">
    <location>
        <begin position="203"/>
        <end position="206"/>
    </location>
</feature>
<feature type="strand" evidence="21">
    <location>
        <begin position="207"/>
        <end position="209"/>
    </location>
</feature>
<feature type="helix" evidence="21">
    <location>
        <begin position="214"/>
        <end position="216"/>
    </location>
</feature>
<feature type="helix" evidence="21">
    <location>
        <begin position="217"/>
        <end position="233"/>
    </location>
</feature>
<feature type="strand" evidence="21">
    <location>
        <begin position="238"/>
        <end position="241"/>
    </location>
</feature>
<feature type="helix" evidence="21">
    <location>
        <begin position="244"/>
        <end position="246"/>
    </location>
</feature>
<feature type="helix" evidence="21">
    <location>
        <begin position="250"/>
        <end position="264"/>
    </location>
</feature>
<feature type="strand" evidence="21">
    <location>
        <begin position="269"/>
        <end position="273"/>
    </location>
</feature>
<feature type="helix" evidence="21">
    <location>
        <begin position="279"/>
        <end position="287"/>
    </location>
</feature>
<feature type="strand" evidence="21">
    <location>
        <begin position="289"/>
        <end position="291"/>
    </location>
</feature>
<feature type="strand" evidence="21">
    <location>
        <begin position="293"/>
        <end position="295"/>
    </location>
</feature>
<feature type="helix" evidence="21">
    <location>
        <begin position="298"/>
        <end position="300"/>
    </location>
</feature>
<feature type="helix" evidence="21">
    <location>
        <begin position="306"/>
        <end position="319"/>
    </location>
</feature>
<feature type="turn" evidence="21">
    <location>
        <begin position="320"/>
        <end position="322"/>
    </location>
</feature>
<feature type="strand" evidence="21">
    <location>
        <begin position="331"/>
        <end position="333"/>
    </location>
</feature>
<feature type="helix" evidence="21">
    <location>
        <begin position="335"/>
        <end position="338"/>
    </location>
</feature>
<feature type="helix" evidence="21">
    <location>
        <begin position="341"/>
        <end position="343"/>
    </location>
</feature>
<feature type="helix" evidence="21">
    <location>
        <begin position="344"/>
        <end position="353"/>
    </location>
</feature>
<feature type="strand" evidence="21">
    <location>
        <begin position="354"/>
        <end position="361"/>
    </location>
</feature>
<feature type="turn" evidence="21">
    <location>
        <begin position="362"/>
        <end position="367"/>
    </location>
</feature>
<feature type="strand" evidence="21">
    <location>
        <begin position="384"/>
        <end position="386"/>
    </location>
</feature>
<feature type="helix" evidence="21">
    <location>
        <begin position="388"/>
        <end position="390"/>
    </location>
</feature>
<feature type="strand" evidence="21">
    <location>
        <begin position="392"/>
        <end position="394"/>
    </location>
</feature>
<feature type="helix" evidence="21">
    <location>
        <begin position="398"/>
        <end position="400"/>
    </location>
</feature>
<feature type="helix" evidence="21">
    <location>
        <begin position="402"/>
        <end position="406"/>
    </location>
</feature>
<feature type="helix" evidence="21">
    <location>
        <begin position="412"/>
        <end position="425"/>
    </location>
</feature>
<feature type="helix" evidence="21">
    <location>
        <begin position="427"/>
        <end position="431"/>
    </location>
</feature>
<feature type="strand" evidence="21">
    <location>
        <begin position="433"/>
        <end position="436"/>
    </location>
</feature>
<feature type="strand" evidence="21">
    <location>
        <begin position="443"/>
        <end position="449"/>
    </location>
</feature>
<feature type="strand" evidence="21">
    <location>
        <begin position="455"/>
        <end position="461"/>
    </location>
</feature>
<feature type="strand" evidence="21">
    <location>
        <begin position="463"/>
        <end position="465"/>
    </location>
</feature>
<feature type="strand" evidence="21">
    <location>
        <begin position="484"/>
        <end position="492"/>
    </location>
</feature>
<feature type="helix" evidence="21">
    <location>
        <begin position="494"/>
        <end position="500"/>
    </location>
</feature>
<feature type="strand" evidence="21">
    <location>
        <begin position="504"/>
        <end position="507"/>
    </location>
</feature>
<feature type="strand" evidence="21">
    <location>
        <begin position="517"/>
        <end position="522"/>
    </location>
</feature>
<gene>
    <name evidence="18" type="primary">Slc3a2</name>
    <name type="synonym">Mdu1</name>
</gene>
<comment type="function">
    <text evidence="1 2 6 7 8 13">Acts as a chaperone that facilitates biogenesis and trafficking of functional transporters heterodimers to the plasma membrane. Forms heterodimer with SLC7 family transporters (SLC7A5, SLC7A6, SLC7A7, SLC7A8, SLC7A10 and SLC7A11), a group of amino-acid antiporters (PubMed:10574970, PubMed:10734121, PubMed:11011012, PubMed:9915839). Heterodimers function as amino acids exchangers, the specificity of the substrate depending on the SLC7A subunit. Heterodimers SLC3A2/SLC7A6 or SLC3A2/SLC7A7 mediate the uptake of dibasic amino acids. Heterodimer SLC3A2/SLC7A11 functions as an antiporter by mediating the exchange of extracellular anionic L-cystine and intracellular L-glutamate across the cellular plasma membrane (By similarity). SLC3A2/SLC7A10 translocates small neutral L- and D-amino acids across the plasma membrane (By similarity). SLC3A2/SLC75 or SLC3A2/SLC7A8 translocates neutral amino acids with broad specificity, thyroid hormones and L-DOPA. SLC3A2 is essential for plasma membrane localization, stability, and the transport activity of SLC7A5 and SLC7A8. When associated with LAPTM4B, the heterodimer SLC7A5 is recruited to lysosomes to promote leucine uptake into these organelles, and thereby mediates mTORC1 activation. Modulates integrin-related signaling and is essential for integrin-dependent cell spreading, migration and tumor progression (By similarity).</text>
</comment>
<comment type="subunit">
    <text evidence="1 6 7 8 13">Disulfide-linked heterodimer with a non-glycosylated light chain (SLC7A5, SLC7A6, SLC7A7, SLC7A8, SLC7A10 or SLC7A11) (PubMed:10574970, PubMed:10734121, PubMed:11011012, PubMed:9915839). Interacts with TLCD3A/CT120 and ICAM1. Constitutively and specifically associates with beta-1 integrins (alpha-2/beta-1, alpha-3/beta-1, alpha-5/beta-1 and alpha-6/beta-1), but minimally with alpha-4/beta-1. Interacts with LAPTM4B; recruits SLC3A2 and SLC7A5 to lysosomes to promote leucine uptake into these organelles and is required for mTORC1 activation (By similarity).</text>
</comment>
<comment type="subcellular location">
    <subcellularLocation>
        <location evidence="1">Apical cell membrane</location>
    </subcellularLocation>
    <subcellularLocation>
        <location evidence="13">Cell membrane</location>
        <topology evidence="1">Single-pass type II membrane protein</topology>
    </subcellularLocation>
    <subcellularLocation>
        <location evidence="13">Cell junction</location>
    </subcellularLocation>
    <subcellularLocation>
        <location evidence="1">Lysosome membrane</location>
    </subcellularLocation>
    <subcellularLocation>
        <location evidence="1">Melanosome</location>
    </subcellularLocation>
    <subcellularLocation>
        <location evidence="6">Basolateral cell membrane</location>
    </subcellularLocation>
    <text evidence="1 3 6 13">Localized at the plasma membrane when associated with SLC7A5 or SLC7A8. Localized to the apical membrane of placental syncytiotrophoblastic cells. Recruited to lysosomes by LAPTM4B (By similarity). Located selectively at cell-cell adhesion sites (PubMed:9915839). Colocalized with SLC7A8/LAT2 at the basolateral membrane of kidney proximal tubules and small intestine epithelia. Expressed in both luminal and abluminal membranes of brain capillary endothelial cells (By similarity).</text>
</comment>
<comment type="alternative products">
    <event type="alternative splicing"/>
    <isoform>
        <id>P10852-1</id>
        <name>1</name>
        <sequence type="displayed"/>
    </isoform>
    <isoform>
        <id>P10852-2</id>
        <name>2</name>
        <sequence type="described" ref="VSP_054953"/>
    </isoform>
</comment>
<comment type="tissue specificity">
    <text evidence="6 12 13">Detected on the surface of embryonic epithelial cells in the epidermis, thymus, kidney, intestine, brain choroid plexus, and in retina. Detected in adult and embryonic brain, spleen, kidney, intestine and liver, and in adult testis (at protein level) (PubMed:9915839). Observed in all adult tissues tested with strongest expression in kidney, small intestine, spleen, thymus and liver (PubMed:9915839). Moderate expression in brain, stomach, heart, testis, lung, skin, pancreas and skeletal muscle. In brain expressed on capillary endothelia in cerebral cortex.</text>
</comment>
<comment type="developmental stage">
    <text evidence="13">Strong expression in the liver of 14 dpc embryo and in brain, spleen, liver, kidney and intestine of an 18 dpc embryo.</text>
</comment>
<comment type="induction">
    <text evidence="12 13">Expression induced by concanavalin-A stimulation. Induced during cell activation but is subsequently maintained at constant levels throughout the cell cycle in exponentially growing cells.</text>
</comment>
<comment type="PTM">
    <text evidence="1">Phosphorylation on Ser-300 or Ser-302 and on Ser-420 by ecto-protein kinases favors heterotypic cell-cell interactions.</text>
</comment>
<comment type="PTM">
    <text evidence="1">N-glycosylated; N-glycosylation is crucial for trafficking and stability of SLC3A2 to the plasma membrane.</text>
</comment>
<comment type="disruption phenotype">
    <text evidence="9">Embryonically lethal between 3.5 and 9.5 dpc.</text>
</comment>
<comment type="similarity">
    <text evidence="16">Belongs to the SLC3A transporter family.</text>
</comment>
<comment type="sequence caution" evidence="16">
    <conflict type="erroneous initiation">
        <sequence resource="EMBL-CDS" id="BAE36291"/>
    </conflict>
    <text>Truncated N-terminus.</text>
</comment>
<keyword id="KW-0002">3D-structure</keyword>
<keyword id="KW-0025">Alternative splicing</keyword>
<keyword id="KW-0029">Amino-acid transport</keyword>
<keyword id="KW-0965">Cell junction</keyword>
<keyword id="KW-1003">Cell membrane</keyword>
<keyword id="KW-0903">Direct protein sequencing</keyword>
<keyword id="KW-1015">Disulfide bond</keyword>
<keyword id="KW-0325">Glycoprotein</keyword>
<keyword id="KW-1017">Isopeptide bond</keyword>
<keyword id="KW-0458">Lysosome</keyword>
<keyword id="KW-0472">Membrane</keyword>
<keyword id="KW-0597">Phosphoprotein</keyword>
<keyword id="KW-1185">Reference proteome</keyword>
<keyword id="KW-0735">Signal-anchor</keyword>
<keyword id="KW-0812">Transmembrane</keyword>
<keyword id="KW-1133">Transmembrane helix</keyword>
<keyword id="KW-0813">Transport</keyword>
<keyword id="KW-0832">Ubl conjugation</keyword>
<sequence length="526" mass="58337">MSQDTEVDMKDVELNELEPEKQPMNAADGAAAGEKNGLVKIKVAEDETEAGVKFTGLSKEELLKVAGSPGWVRTRWALLLLFWLGWLGMLAGAVVIIVRAPRCRELPVQRWWHKGALYRIGDLQAFVGRDAGGIAGLKSHLEYLSTLKVKGLVLGPIHKNQKDEINETDLKQINPTLGSQEDFKDLLQSAKKKSIHIILDLTPNYQGQNAWFLPAQADIVATKMKEALSSWLQDGVDGFQFRDVGKLMNAPLYLAEWQNITKNLSEDRLLIAGTESSDLQQIVNILESTSDLLLTSSYLSNSTFTGERTESLVTRFLNATGSQWCSWSVSQAGLLADFIPDHLLRLYQLLLFTLPGTPVFSYGDELGLQGALPGQPAKAPLMPWNESSIFHIPRPVSLNMTVKGQNEDPGSLLTQFRRLSDLRGKERSLLHGDFHALSSSPDLFSYIRHWDQNERYLVVLNFRDSGRSARLGASNLPAGISLPASAKLLLSTDSARQSREEDTSLKLENLSLNPYEGLLLQFPFVA</sequence>
<name>4F2_MOUSE</name>